<evidence type="ECO:0000250" key="1"/>
<evidence type="ECO:0000255" key="2">
    <source>
        <dbReference type="PROSITE-ProRule" id="PRU00159"/>
    </source>
</evidence>
<evidence type="ECO:0000256" key="3">
    <source>
        <dbReference type="SAM" id="MobiDB-lite"/>
    </source>
</evidence>
<evidence type="ECO:0000269" key="4">
    <source>
    </source>
</evidence>
<evidence type="ECO:0000269" key="5">
    <source>
    </source>
</evidence>
<evidence type="ECO:0000305" key="6"/>
<accession>Q5SN53</accession>
<accession>Q8H0P0</accession>
<organism>
    <name type="scientific">Oryza sativa subsp. japonica</name>
    <name type="common">Rice</name>
    <dbReference type="NCBI Taxonomy" id="39947"/>
    <lineage>
        <taxon>Eukaryota</taxon>
        <taxon>Viridiplantae</taxon>
        <taxon>Streptophyta</taxon>
        <taxon>Embryophyta</taxon>
        <taxon>Tracheophyta</taxon>
        <taxon>Spermatophyta</taxon>
        <taxon>Magnoliopsida</taxon>
        <taxon>Liliopsida</taxon>
        <taxon>Poales</taxon>
        <taxon>Poaceae</taxon>
        <taxon>BOP clade</taxon>
        <taxon>Oryzoideae</taxon>
        <taxon>Oryzeae</taxon>
        <taxon>Oryzinae</taxon>
        <taxon>Oryza</taxon>
        <taxon>Oryza sativa</taxon>
    </lineage>
</organism>
<name>MPK8_ORYSJ</name>
<dbReference type="EC" id="2.7.11.24"/>
<dbReference type="EMBL" id="AJ512643">
    <property type="protein sequence ID" value="CAD54742.1"/>
    <property type="molecule type" value="mRNA"/>
</dbReference>
<dbReference type="EMBL" id="AP003222">
    <property type="protein sequence ID" value="BAD72351.1"/>
    <property type="molecule type" value="Genomic_DNA"/>
</dbReference>
<dbReference type="EMBL" id="AP003222">
    <property type="protein sequence ID" value="BAD72352.1"/>
    <property type="status" value="ALT_SEQ"/>
    <property type="molecule type" value="Genomic_DNA"/>
</dbReference>
<dbReference type="EMBL" id="AP014957">
    <property type="status" value="NOT_ANNOTATED_CDS"/>
    <property type="molecule type" value="Genomic_DNA"/>
</dbReference>
<dbReference type="RefSeq" id="XP_015611073.1">
    <property type="nucleotide sequence ID" value="XM_015755587.1"/>
</dbReference>
<dbReference type="SMR" id="Q5SN53"/>
<dbReference type="FunCoup" id="Q5SN53">
    <property type="interactions" value="246"/>
</dbReference>
<dbReference type="STRING" id="39947.Q5SN53"/>
<dbReference type="PaxDb" id="39947-Q5SN53"/>
<dbReference type="EnsemblPlants" id="Os01t0665200-04">
    <property type="protein sequence ID" value="Os01t0665200-04"/>
    <property type="gene ID" value="Os01g0665200"/>
</dbReference>
<dbReference type="Gramene" id="Os01t0665200-04">
    <property type="protein sequence ID" value="Os01t0665200-04"/>
    <property type="gene ID" value="Os01g0665200"/>
</dbReference>
<dbReference type="eggNOG" id="KOG0660">
    <property type="taxonomic scope" value="Eukaryota"/>
</dbReference>
<dbReference type="InParanoid" id="Q5SN53"/>
<dbReference type="OrthoDB" id="2396at2759"/>
<dbReference type="Proteomes" id="UP000000763">
    <property type="component" value="Chromosome 1"/>
</dbReference>
<dbReference type="Proteomes" id="UP000059680">
    <property type="component" value="Chromosome 1"/>
</dbReference>
<dbReference type="GO" id="GO:0005737">
    <property type="term" value="C:cytoplasm"/>
    <property type="evidence" value="ECO:0000318"/>
    <property type="project" value="GO_Central"/>
</dbReference>
<dbReference type="GO" id="GO:0005634">
    <property type="term" value="C:nucleus"/>
    <property type="evidence" value="ECO:0000318"/>
    <property type="project" value="GO_Central"/>
</dbReference>
<dbReference type="GO" id="GO:0005524">
    <property type="term" value="F:ATP binding"/>
    <property type="evidence" value="ECO:0007669"/>
    <property type="project" value="UniProtKB-KW"/>
</dbReference>
<dbReference type="GO" id="GO:0004707">
    <property type="term" value="F:MAP kinase activity"/>
    <property type="evidence" value="ECO:0007669"/>
    <property type="project" value="UniProtKB-EC"/>
</dbReference>
<dbReference type="GO" id="GO:0106310">
    <property type="term" value="F:protein serine kinase activity"/>
    <property type="evidence" value="ECO:0007669"/>
    <property type="project" value="RHEA"/>
</dbReference>
<dbReference type="GO" id="GO:0004674">
    <property type="term" value="F:protein serine/threonine kinase activity"/>
    <property type="evidence" value="ECO:0000318"/>
    <property type="project" value="GO_Central"/>
</dbReference>
<dbReference type="GO" id="GO:0035556">
    <property type="term" value="P:intracellular signal transduction"/>
    <property type="evidence" value="ECO:0000318"/>
    <property type="project" value="GO_Central"/>
</dbReference>
<dbReference type="CDD" id="cd07859">
    <property type="entry name" value="STKc_TDY_MAPK"/>
    <property type="match status" value="1"/>
</dbReference>
<dbReference type="FunFam" id="1.10.510.10:FF:000017">
    <property type="entry name" value="Mitogen-activated protein kinase"/>
    <property type="match status" value="1"/>
</dbReference>
<dbReference type="FunFam" id="3.30.200.20:FF:000046">
    <property type="entry name" value="Mitogen-activated protein kinase"/>
    <property type="match status" value="1"/>
</dbReference>
<dbReference type="Gene3D" id="3.30.200.20">
    <property type="entry name" value="Phosphorylase Kinase, domain 1"/>
    <property type="match status" value="1"/>
</dbReference>
<dbReference type="Gene3D" id="1.10.510.10">
    <property type="entry name" value="Transferase(Phosphotransferase) domain 1"/>
    <property type="match status" value="1"/>
</dbReference>
<dbReference type="InterPro" id="IPR011009">
    <property type="entry name" value="Kinase-like_dom_sf"/>
</dbReference>
<dbReference type="InterPro" id="IPR050117">
    <property type="entry name" value="MAP_kinase"/>
</dbReference>
<dbReference type="InterPro" id="IPR003527">
    <property type="entry name" value="MAP_kinase_CS"/>
</dbReference>
<dbReference type="InterPro" id="IPR000719">
    <property type="entry name" value="Prot_kinase_dom"/>
</dbReference>
<dbReference type="InterPro" id="IPR017441">
    <property type="entry name" value="Protein_kinase_ATP_BS"/>
</dbReference>
<dbReference type="PANTHER" id="PTHR24055">
    <property type="entry name" value="MITOGEN-ACTIVATED PROTEIN KINASE"/>
    <property type="match status" value="1"/>
</dbReference>
<dbReference type="Pfam" id="PF00069">
    <property type="entry name" value="Pkinase"/>
    <property type="match status" value="1"/>
</dbReference>
<dbReference type="SMART" id="SM00220">
    <property type="entry name" value="S_TKc"/>
    <property type="match status" value="1"/>
</dbReference>
<dbReference type="SUPFAM" id="SSF56112">
    <property type="entry name" value="Protein kinase-like (PK-like)"/>
    <property type="match status" value="1"/>
</dbReference>
<dbReference type="PROSITE" id="PS01351">
    <property type="entry name" value="MAPK"/>
    <property type="match status" value="1"/>
</dbReference>
<dbReference type="PROSITE" id="PS00107">
    <property type="entry name" value="PROTEIN_KINASE_ATP"/>
    <property type="match status" value="1"/>
</dbReference>
<dbReference type="PROSITE" id="PS50011">
    <property type="entry name" value="PROTEIN_KINASE_DOM"/>
    <property type="match status" value="1"/>
</dbReference>
<reference key="1">
    <citation type="journal article" date="2003" name="Biochem. Biophys. Res. Commun.">
        <title>Novel rice MAP kinases OsMSRMK3 and OsWJUMK1 involved in encountering diverse environmental stresses and developmental regulation.</title>
        <authorList>
            <person name="Agrawal G.K."/>
            <person name="Agrawal S.K."/>
            <person name="Shibato J."/>
            <person name="Iwahashi H."/>
            <person name="Rakwal R."/>
        </authorList>
    </citation>
    <scope>NUCLEOTIDE SEQUENCE [MRNA]</scope>
    <scope>TISSUE SPECIFICITY</scope>
    <scope>INDUCTION</scope>
    <source>
        <strain>cv. Nipponbare</strain>
        <tissue>Leaf</tissue>
    </source>
</reference>
<reference key="2">
    <citation type="journal article" date="2002" name="Nature">
        <title>The genome sequence and structure of rice chromosome 1.</title>
        <authorList>
            <person name="Sasaki T."/>
            <person name="Matsumoto T."/>
            <person name="Yamamoto K."/>
            <person name="Sakata K."/>
            <person name="Baba T."/>
            <person name="Katayose Y."/>
            <person name="Wu J."/>
            <person name="Niimura Y."/>
            <person name="Cheng Z."/>
            <person name="Nagamura Y."/>
            <person name="Antonio B.A."/>
            <person name="Kanamori H."/>
            <person name="Hosokawa S."/>
            <person name="Masukawa M."/>
            <person name="Arikawa K."/>
            <person name="Chiden Y."/>
            <person name="Hayashi M."/>
            <person name="Okamoto M."/>
            <person name="Ando T."/>
            <person name="Aoki H."/>
            <person name="Arita K."/>
            <person name="Hamada M."/>
            <person name="Harada C."/>
            <person name="Hijishita S."/>
            <person name="Honda M."/>
            <person name="Ichikawa Y."/>
            <person name="Idonuma A."/>
            <person name="Iijima M."/>
            <person name="Ikeda M."/>
            <person name="Ikeno M."/>
            <person name="Ito S."/>
            <person name="Ito T."/>
            <person name="Ito Y."/>
            <person name="Ito Y."/>
            <person name="Iwabuchi A."/>
            <person name="Kamiya K."/>
            <person name="Karasawa W."/>
            <person name="Katagiri S."/>
            <person name="Kikuta A."/>
            <person name="Kobayashi N."/>
            <person name="Kono I."/>
            <person name="Machita K."/>
            <person name="Maehara T."/>
            <person name="Mizuno H."/>
            <person name="Mizubayashi T."/>
            <person name="Mukai Y."/>
            <person name="Nagasaki H."/>
            <person name="Nakashima M."/>
            <person name="Nakama Y."/>
            <person name="Nakamichi Y."/>
            <person name="Nakamura M."/>
            <person name="Namiki N."/>
            <person name="Negishi M."/>
            <person name="Ohta I."/>
            <person name="Ono N."/>
            <person name="Saji S."/>
            <person name="Sakai K."/>
            <person name="Shibata M."/>
            <person name="Shimokawa T."/>
            <person name="Shomura A."/>
            <person name="Song J."/>
            <person name="Takazaki Y."/>
            <person name="Terasawa K."/>
            <person name="Tsuji K."/>
            <person name="Waki K."/>
            <person name="Yamagata H."/>
            <person name="Yamane H."/>
            <person name="Yoshiki S."/>
            <person name="Yoshihara R."/>
            <person name="Yukawa K."/>
            <person name="Zhong H."/>
            <person name="Iwama H."/>
            <person name="Endo T."/>
            <person name="Ito H."/>
            <person name="Hahn J.H."/>
            <person name="Kim H.-I."/>
            <person name="Eun M.-Y."/>
            <person name="Yano M."/>
            <person name="Jiang J."/>
            <person name="Gojobori T."/>
        </authorList>
    </citation>
    <scope>NUCLEOTIDE SEQUENCE [LARGE SCALE GENOMIC DNA]</scope>
    <source>
        <strain>cv. Nipponbare</strain>
    </source>
</reference>
<reference key="3">
    <citation type="journal article" date="2005" name="Nature">
        <title>The map-based sequence of the rice genome.</title>
        <authorList>
            <consortium name="International rice genome sequencing project (IRGSP)"/>
        </authorList>
    </citation>
    <scope>NUCLEOTIDE SEQUENCE [LARGE SCALE GENOMIC DNA]</scope>
    <source>
        <strain>cv. Nipponbare</strain>
    </source>
</reference>
<reference key="4">
    <citation type="journal article" date="2013" name="Rice">
        <title>Improvement of the Oryza sativa Nipponbare reference genome using next generation sequence and optical map data.</title>
        <authorList>
            <person name="Kawahara Y."/>
            <person name="de la Bastide M."/>
            <person name="Hamilton J.P."/>
            <person name="Kanamori H."/>
            <person name="McCombie W.R."/>
            <person name="Ouyang S."/>
            <person name="Schwartz D.C."/>
            <person name="Tanaka T."/>
            <person name="Wu J."/>
            <person name="Zhou S."/>
            <person name="Childs K.L."/>
            <person name="Davidson R.M."/>
            <person name="Lin H."/>
            <person name="Quesada-Ocampo L."/>
            <person name="Vaillancourt B."/>
            <person name="Sakai H."/>
            <person name="Lee S.S."/>
            <person name="Kim J."/>
            <person name="Numa H."/>
            <person name="Itoh T."/>
            <person name="Buell C.R."/>
            <person name="Matsumoto T."/>
        </authorList>
    </citation>
    <scope>GENOME REANNOTATION</scope>
    <source>
        <strain>cv. Nipponbare</strain>
    </source>
</reference>
<reference key="5">
    <citation type="journal article" date="2006" name="Mol. Plant Microbe Interact.">
        <title>Molecular analysis of the rice MAP kinase gene family in relation to Magnaporthe grisea infection.</title>
        <authorList>
            <person name="Reyna N.S."/>
            <person name="Yang Y."/>
        </authorList>
    </citation>
    <scope>INDUCTION</scope>
    <scope>NOMENCLATURE</scope>
</reference>
<protein>
    <recommendedName>
        <fullName>Mitogen-activated protein kinase 8</fullName>
        <shortName>MAP kinase 8</shortName>
        <ecNumber>2.7.11.24</ecNumber>
    </recommendedName>
    <alternativeName>
        <fullName>OsWJUMK1</fullName>
    </alternativeName>
    <alternativeName>
        <fullName>Wound- and JA-uninducible MAP kinase 1</fullName>
    </alternativeName>
</protein>
<gene>
    <name type="primary">MPK8</name>
    <name type="synonym">WJUMK1</name>
    <name type="ordered locus">Os01g0665200</name>
    <name type="ordered locus">LOC_Os01g47530</name>
    <name type="ORF">P0003E08.19-1</name>
</gene>
<comment type="catalytic activity">
    <reaction>
        <text>L-seryl-[protein] + ATP = O-phospho-L-seryl-[protein] + ADP + H(+)</text>
        <dbReference type="Rhea" id="RHEA:17989"/>
        <dbReference type="Rhea" id="RHEA-COMP:9863"/>
        <dbReference type="Rhea" id="RHEA-COMP:11604"/>
        <dbReference type="ChEBI" id="CHEBI:15378"/>
        <dbReference type="ChEBI" id="CHEBI:29999"/>
        <dbReference type="ChEBI" id="CHEBI:30616"/>
        <dbReference type="ChEBI" id="CHEBI:83421"/>
        <dbReference type="ChEBI" id="CHEBI:456216"/>
        <dbReference type="EC" id="2.7.11.24"/>
    </reaction>
</comment>
<comment type="catalytic activity">
    <reaction>
        <text>L-threonyl-[protein] + ATP = O-phospho-L-threonyl-[protein] + ADP + H(+)</text>
        <dbReference type="Rhea" id="RHEA:46608"/>
        <dbReference type="Rhea" id="RHEA-COMP:11060"/>
        <dbReference type="Rhea" id="RHEA-COMP:11605"/>
        <dbReference type="ChEBI" id="CHEBI:15378"/>
        <dbReference type="ChEBI" id="CHEBI:30013"/>
        <dbReference type="ChEBI" id="CHEBI:30616"/>
        <dbReference type="ChEBI" id="CHEBI:61977"/>
        <dbReference type="ChEBI" id="CHEBI:456216"/>
        <dbReference type="EC" id="2.7.11.24"/>
    </reaction>
</comment>
<comment type="activity regulation">
    <text evidence="1">Activated by threonine and tyrosine phosphorylation.</text>
</comment>
<comment type="tissue specificity">
    <text evidence="4">Expressed in leaves and panicles.</text>
</comment>
<comment type="induction">
    <text evidence="4 5">By heavy metals, abscisic acid (ABA) and infection with rice blast fungus (M.grisea). Down-regulated by high temperature and UV-C.</text>
</comment>
<comment type="domain">
    <text>The TXY motif contains the threonine and tyrosine residues whose phosphorylation activates the MAP kinases.</text>
</comment>
<comment type="PTM">
    <text evidence="1">Dually phosphorylated on Thr-175 and Tyr-177, which activates the enzyme.</text>
</comment>
<comment type="similarity">
    <text evidence="6">Belongs to the protein kinase superfamily. CMGC Ser/Thr protein kinase family. MAP kinase subfamily.</text>
</comment>
<comment type="sequence caution" evidence="6">
    <conflict type="erroneous gene model prediction">
        <sequence resource="EMBL-CDS" id="BAD72352"/>
    </conflict>
</comment>
<keyword id="KW-0067">ATP-binding</keyword>
<keyword id="KW-0418">Kinase</keyword>
<keyword id="KW-0547">Nucleotide-binding</keyword>
<keyword id="KW-0597">Phosphoprotein</keyword>
<keyword id="KW-1185">Reference proteome</keyword>
<keyword id="KW-0723">Serine/threonine-protein kinase</keyword>
<keyword id="KW-0808">Transferase</keyword>
<proteinExistence type="evidence at transcript level"/>
<sequence>MDFFSEYGDANRYKIQEVIGKGSYGVVCSAIDQHTGDKVAIKKIHNIFEHLSDAARILREIKLLRLLRHPDIVEIKHIMLPPSRRDFKDIYVVFELMDTDLHQVIKANDDLTKEHHQFFLYQMLRALKYIHTANVYHRDLKPKNILANANCKLKICDFGLARVAFNDTPTTVFWTDYVATRWYRAPELCGSFFTKYSPAIDIWSIGCIFAEILTGKPLFPGKNVVHQLDLMTDLLGTPSMDTVTRIRNEKARRYLSSMRKKQPVPFSERFPKADPAALKLLQRLLAFDPKDRPTAEEALADPYFKGLAKAEREPSCQPITKMEFEFERRKVTKEDVKELIFREILEYHPQLLKDYMNGTEKTNFLYPSALDNFRRQFANLEENGGKNGDAVPSDRKHVSLPRTTTVHSAPIPPKDHQNITSQVPQRIPGRTGRGACPVIPFENLSAMGPYNQRRVVRNPVLPPATTNLSAYAYHRKSDSSERELQQELEKDRMRYQPSEHFMDAKVVSHMSHDLRASSYYVSKAKSDVADRAALQSNMMQGIGPFNGIAAVGGNYNKVSTVQYGVSRMY</sequence>
<feature type="chain" id="PRO_0000239751" description="Mitogen-activated protein kinase 8">
    <location>
        <begin position="1"/>
        <end position="569"/>
    </location>
</feature>
<feature type="domain" description="Protein kinase" evidence="2">
    <location>
        <begin position="13"/>
        <end position="304"/>
    </location>
</feature>
<feature type="region of interest" description="Disordered" evidence="3">
    <location>
        <begin position="404"/>
        <end position="432"/>
    </location>
</feature>
<feature type="short sequence motif" description="TXY">
    <location>
        <begin position="175"/>
        <end position="177"/>
    </location>
</feature>
<feature type="active site" description="Proton acceptor" evidence="2">
    <location>
        <position position="139"/>
    </location>
</feature>
<feature type="binding site" evidence="2">
    <location>
        <begin position="19"/>
        <end position="27"/>
    </location>
    <ligand>
        <name>ATP</name>
        <dbReference type="ChEBI" id="CHEBI:30616"/>
    </ligand>
</feature>
<feature type="binding site" evidence="2">
    <location>
        <position position="42"/>
    </location>
    <ligand>
        <name>ATP</name>
        <dbReference type="ChEBI" id="CHEBI:30616"/>
    </ligand>
</feature>
<feature type="modified residue" description="Phosphothreonine" evidence="1">
    <location>
        <position position="175"/>
    </location>
</feature>
<feature type="modified residue" description="Phosphotyrosine" evidence="1">
    <location>
        <position position="177"/>
    </location>
</feature>